<gene>
    <name type="primary">VTG</name>
</gene>
<evidence type="ECO:0000255" key="1"/>
<evidence type="ECO:0000255" key="2">
    <source>
        <dbReference type="PROSITE-ProRule" id="PRU00557"/>
    </source>
</evidence>
<evidence type="ECO:0000255" key="3">
    <source>
        <dbReference type="PROSITE-ProRule" id="PRU00580"/>
    </source>
</evidence>
<evidence type="ECO:0000256" key="4">
    <source>
        <dbReference type="SAM" id="MobiDB-lite"/>
    </source>
</evidence>
<proteinExistence type="inferred from homology"/>
<comment type="function">
    <text>Precursor of the egg-yolk proteins that are sources of nutrients during embryonic development.</text>
</comment>
<comment type="subcellular location">
    <subcellularLocation>
        <location>Secreted</location>
    </subcellularLocation>
</comment>
<protein>
    <recommendedName>
        <fullName>Vitellogenin</fullName>
    </recommendedName>
    <component>
        <recommendedName>
            <fullName>YP47</fullName>
        </recommendedName>
    </component>
    <component>
        <recommendedName>
            <fullName>YP160</fullName>
        </recommendedName>
    </component>
</protein>
<name>VIT_ANTGR</name>
<feature type="signal peptide" evidence="1">
    <location>
        <begin position="1"/>
        <end position="19"/>
    </location>
</feature>
<feature type="chain" id="PRO_0000041542" description="Vitellogenin">
    <location>
        <begin position="20"/>
        <end position="1790"/>
    </location>
</feature>
<feature type="chain" id="PRO_0000041543" description="YP47">
    <location>
        <begin position="20"/>
        <end status="unknown"/>
    </location>
</feature>
<feature type="chain" id="PRO_0000041544" description="YP160">
    <location>
        <begin status="unknown"/>
        <end position="1790"/>
    </location>
</feature>
<feature type="domain" description="Vitellogenin" evidence="2">
    <location>
        <begin position="23"/>
        <end position="799"/>
    </location>
</feature>
<feature type="domain" description="VWFD" evidence="3">
    <location>
        <begin position="1466"/>
        <end position="1675"/>
    </location>
</feature>
<feature type="region of interest" description="Disordered" evidence="4">
    <location>
        <begin position="342"/>
        <end position="400"/>
    </location>
</feature>
<feature type="compositionally biased region" description="Acidic residues" evidence="4">
    <location>
        <begin position="342"/>
        <end position="353"/>
    </location>
</feature>
<feature type="compositionally biased region" description="Low complexity" evidence="4">
    <location>
        <begin position="378"/>
        <end position="389"/>
    </location>
</feature>
<feature type="glycosylation site" description="N-linked (GlcNAc...) asparagine" evidence="1">
    <location>
        <position position="219"/>
    </location>
</feature>
<feature type="glycosylation site" description="N-linked (GlcNAc...) asparagine" evidence="1">
    <location>
        <position position="297"/>
    </location>
</feature>
<feature type="glycosylation site" description="N-linked (GlcNAc...) asparagine" evidence="1">
    <location>
        <position position="554"/>
    </location>
</feature>
<feature type="glycosylation site" description="N-linked (GlcNAc...) asparagine" evidence="1">
    <location>
        <position position="573"/>
    </location>
</feature>
<feature type="glycosylation site" description="N-linked (GlcNAc...) asparagine" evidence="1">
    <location>
        <position position="893"/>
    </location>
</feature>
<feature type="glycosylation site" description="N-linked (GlcNAc...) asparagine" evidence="1">
    <location>
        <position position="1345"/>
    </location>
</feature>
<feature type="glycosylation site" description="N-linked (GlcNAc...) asparagine" evidence="1">
    <location>
        <position position="1416"/>
    </location>
</feature>
<feature type="glycosylation site" description="N-linked (GlcNAc...) asparagine" evidence="1">
    <location>
        <position position="1430"/>
    </location>
</feature>
<feature type="glycosylation site" description="N-linked (GlcNAc...) asparagine" evidence="1">
    <location>
        <position position="1480"/>
    </location>
</feature>
<feature type="glycosylation site" description="N-linked (GlcNAc...) asparagine" evidence="1">
    <location>
        <position position="1699"/>
    </location>
</feature>
<feature type="glycosylation site" description="N-linked (GlcNAc...) asparagine" evidence="1">
    <location>
        <position position="1735"/>
    </location>
</feature>
<feature type="disulfide bond" evidence="3">
    <location>
        <begin position="1468"/>
        <end position="1638"/>
    </location>
</feature>
<reference key="1">
    <citation type="journal article" date="1992" name="J. Mol. Evol.">
        <title>The boll weevil vitellogenin gene: nucleotide sequence, structure, and evolutionary relationship to nematode and vertebrate vitellogenin genes.</title>
        <authorList>
            <person name="Trewitt P.M."/>
            <person name="Heilmann L.J."/>
            <person name="Degrugillier S.S."/>
            <person name="Kumaran A.K."/>
        </authorList>
    </citation>
    <scope>NUCLEOTIDE SEQUENCE [GENOMIC DNA]</scope>
</reference>
<keyword id="KW-1015">Disulfide bond</keyword>
<keyword id="KW-0325">Glycoprotein</keyword>
<keyword id="KW-0964">Secreted</keyword>
<keyword id="KW-0732">Signal</keyword>
<keyword id="KW-0758">Storage protein</keyword>
<organism>
    <name type="scientific">Anthonomus grandis</name>
    <name type="common">Mexican cotton boll weevil</name>
    <name type="synonym">Anthonomus thurberiae</name>
    <dbReference type="NCBI Taxonomy" id="7044"/>
    <lineage>
        <taxon>Eukaryota</taxon>
        <taxon>Metazoa</taxon>
        <taxon>Ecdysozoa</taxon>
        <taxon>Arthropoda</taxon>
        <taxon>Hexapoda</taxon>
        <taxon>Insecta</taxon>
        <taxon>Pterygota</taxon>
        <taxon>Neoptera</taxon>
        <taxon>Endopterygota</taxon>
        <taxon>Coleoptera</taxon>
        <taxon>Polyphaga</taxon>
        <taxon>Cucujiformia</taxon>
        <taxon>Curculionidae</taxon>
        <taxon>Curculioninae</taxon>
        <taxon>Anthonomini</taxon>
        <taxon>Anthonomus</taxon>
    </lineage>
</organism>
<accession>Q05808</accession>
<dbReference type="EMBL" id="M72980">
    <property type="protein sequence ID" value="AAA27740.1"/>
    <property type="molecule type" value="Genomic_DNA"/>
</dbReference>
<dbReference type="PIR" id="S27772">
    <property type="entry name" value="S27772"/>
</dbReference>
<dbReference type="SMR" id="Q05808"/>
<dbReference type="GlyCosmos" id="Q05808">
    <property type="glycosylation" value="11 sites, No reported glycans"/>
</dbReference>
<dbReference type="GO" id="GO:0005576">
    <property type="term" value="C:extracellular region"/>
    <property type="evidence" value="ECO:0007669"/>
    <property type="project" value="UniProtKB-SubCell"/>
</dbReference>
<dbReference type="GO" id="GO:0005319">
    <property type="term" value="F:lipid transporter activity"/>
    <property type="evidence" value="ECO:0007669"/>
    <property type="project" value="InterPro"/>
</dbReference>
<dbReference type="GO" id="GO:0045735">
    <property type="term" value="F:nutrient reservoir activity"/>
    <property type="evidence" value="ECO:0007669"/>
    <property type="project" value="UniProtKB-KW"/>
</dbReference>
<dbReference type="FunFam" id="1.25.10.20:FF:000003">
    <property type="entry name" value="Vitellogenin C"/>
    <property type="match status" value="1"/>
</dbReference>
<dbReference type="Gene3D" id="2.30.230.10">
    <property type="entry name" value="Lipovitellin, beta-sheet shell regions, chain A"/>
    <property type="match status" value="1"/>
</dbReference>
<dbReference type="Gene3D" id="2.20.80.10">
    <property type="entry name" value="Lipovitellin-phosvitin complex, chain A, domain 4"/>
    <property type="match status" value="1"/>
</dbReference>
<dbReference type="Gene3D" id="1.25.10.20">
    <property type="entry name" value="Vitellinogen, superhelical"/>
    <property type="match status" value="1"/>
</dbReference>
<dbReference type="InterPro" id="IPR015819">
    <property type="entry name" value="Lipid_transp_b-sht_shell"/>
</dbReference>
<dbReference type="InterPro" id="IPR011030">
    <property type="entry name" value="Lipovitellin_superhlx_dom"/>
</dbReference>
<dbReference type="InterPro" id="IPR015816">
    <property type="entry name" value="Vitellinogen_b-sht_N"/>
</dbReference>
<dbReference type="InterPro" id="IPR015255">
    <property type="entry name" value="Vitellinogen_open_b-sht"/>
</dbReference>
<dbReference type="InterPro" id="IPR050733">
    <property type="entry name" value="Vitellogenin/Apolipophorin"/>
</dbReference>
<dbReference type="InterPro" id="IPR001747">
    <property type="entry name" value="Vitellogenin_N"/>
</dbReference>
<dbReference type="InterPro" id="IPR001846">
    <property type="entry name" value="VWF_type-D"/>
</dbReference>
<dbReference type="PANTHER" id="PTHR23345:SF15">
    <property type="entry name" value="VITELLOGENIN 1-RELATED"/>
    <property type="match status" value="1"/>
</dbReference>
<dbReference type="PANTHER" id="PTHR23345">
    <property type="entry name" value="VITELLOGENIN-RELATED"/>
    <property type="match status" value="1"/>
</dbReference>
<dbReference type="Pfam" id="PF09172">
    <property type="entry name" value="Vit_open_b-sht"/>
    <property type="match status" value="1"/>
</dbReference>
<dbReference type="Pfam" id="PF01347">
    <property type="entry name" value="Vitellogenin_N"/>
    <property type="match status" value="1"/>
</dbReference>
<dbReference type="Pfam" id="PF00094">
    <property type="entry name" value="VWD"/>
    <property type="match status" value="1"/>
</dbReference>
<dbReference type="SMART" id="SM01169">
    <property type="entry name" value="DUF1943"/>
    <property type="match status" value="1"/>
</dbReference>
<dbReference type="SMART" id="SM00638">
    <property type="entry name" value="LPD_N"/>
    <property type="match status" value="1"/>
</dbReference>
<dbReference type="SMART" id="SM00216">
    <property type="entry name" value="VWD"/>
    <property type="match status" value="1"/>
</dbReference>
<dbReference type="SUPFAM" id="SSF56968">
    <property type="entry name" value="Lipovitellin-phosvitin complex, beta-sheet shell regions"/>
    <property type="match status" value="2"/>
</dbReference>
<dbReference type="SUPFAM" id="SSF48431">
    <property type="entry name" value="Lipovitellin-phosvitin complex, superhelical domain"/>
    <property type="match status" value="1"/>
</dbReference>
<dbReference type="PROSITE" id="PS51211">
    <property type="entry name" value="VITELLOGENIN"/>
    <property type="match status" value="1"/>
</dbReference>
<dbReference type="PROSITE" id="PS51233">
    <property type="entry name" value="VWFD"/>
    <property type="match status" value="1"/>
</dbReference>
<sequence length="1790" mass="205858">MWSTVALCLLVGLSYVSSSSPAWKDNTEYVYSVNGRTLTGLEETADQYSGVFLEAKLHLSIRPDGKLQGRISEPKFAQILSQLPDGWKSEIPDSQISYKQLQLSQKPFQLVLENGLIKRLIVEKDTLNWEANIIKSIVSQFQMDLQGENALQNPTSSFPTNEYMDAVFKTMEETVTGKTETIYDIHRLPEYLVQSQPWIAPQYKLKGEGDLIEVIKSKNYTNARDRPSYHYGFGEIEESEPTANKMGQFFIRQSNSRAILTGKPSRYIIQSTYTVNKIMVNPILKNKEMGSITSMVNVTLLEINNQQQQPEELSNPLDIGNLVYTYGQPKNNQVHSKLNENLMEDSSSEESSEQEMTHRRFRRSANSLTKQWRESSEEWNQQQQQPRPQLTRAPHSPLLPSMVGYHGKSIKENKDFDIRQNVENLVTEISDEIKQSEKTISKHTLDKYTILNTLVRLMDEDDIQFVAEQMYSQMKNGQQRYTWSIFRDSVAEAGTGPALLNIKKWIETKKIQKTEAAQVIGTLAQSTRFPTEEYMRKFFELATETQVRQQETLNQTCILSYTNLVHKVYINRNESHNQFPVHAFGSFYTKKGREFVKTTVIPHLKQELEKAISNADNNKIHVMIRALGNIGHKSILNVFQPYFEGEKQVSQFQRLMMVACMDRLADCYPHIARSVFYKIYQNTAELPEIRVVAVHQLIRANPPVEMLQRMAQYTNTDSQEEVNAAVKSVIESSCKLESSKHAELRKAAQSARPLLTKKQYGMEQSYINLRDYVAEQMGLELHVQRTSHSSAESSFPKIMKFQLHQHNHGMKQHILSTGGMISSIRELLNVLYRQTEVFQQEKSQRSQEQGKDNEWSSANIARLMNYERDEREQLEAIIYAQVEDVQKLWSFDNQTLEHLPEVIRQQEEIYRQGKDFSYVKLKQLNEMALSFPTEMGLPFLYTYDVPVLMKVEGKIRALANPAISRNNKLTKPEQISTEIKARVTCTGKTQSHLSFVTPFDHQIYMAGYDKNMYVSIPVNARLEMDVKSKEAKIEFEVEQQQQDSRLVHITSTPYTSRSDVMAISPVALRPNTYVIKSHRNNHRYFDFNFGKKETGLTFRGWGHHPEQSIGFNDLVSMWQSRGVAGVWEQLWDKCSTEYSEATISFIPSQSTTRKATFRINVDQKYQKQPETQSPEDLLTLNQLSSKLQKDEPKQRQQEIKKHVGSGINSALLSCSDISLEFEGDKKYEHVVGFAVAKSNADPKSRVMFYYKNKNENKQGALEIRSEIPNTNGLNLDDSLDTEPSTKYNMRLQYGNSENDAFEISAQAQLSRSQERKQYLINQDPLYHVCKEQMQQKNFQLPACQNMTIKANFLDHIKYQVQYQKLNWKLVETLEGMFKGLRVLYYPMTEIKSISSVGQNVVEGEVQFQPEDFRQVNVTVRNTDEETVFFNISLNNELLRTLLVPHPVFHAKCRFAGLMQGQQNYRPTCVIDQTTAQTFSNKTYSVNLDKEPTVVMQYVPKDARVNGQQSKSVEQLLRESIENYVVLVRQVAANQKEVIINLNHPRTQGKTVKIEMKPSEDRQKSARNPAAKVTIDGQEMHFDDKQIADKCDGYVQVYALPNGEVKLEVEDAFYLIYDGQRVKVTATGNKLRDSVYGLCGRFSQDKHEDFTVPSNCVTRDTRKFVESYQVEKGQQWRNSPSEQCIKKVLPLYTNVISNQNGSQMRTKLASGTVMKHRYIEENGEICFTIRPLPVCNTSVKQVVTKNVPVHCIQGTKTAYYYKSLIDQGGNPDFSRKSETRTARMEVAAQCN</sequence>